<dbReference type="EMBL" id="M77747">
    <property type="protein sequence ID" value="AAA40029.1"/>
    <property type="molecule type" value="mRNA"/>
</dbReference>
<dbReference type="EMBL" id="S37648">
    <property type="protein sequence ID" value="AAB22330.1"/>
    <property type="molecule type" value="mRNA"/>
</dbReference>
<dbReference type="EMBL" id="U02298">
    <property type="protein sequence ID" value="AAA18302.1"/>
    <property type="molecule type" value="Unassigned_DNA"/>
</dbReference>
<dbReference type="EMBL" id="X70675">
    <property type="protein sequence ID" value="CAA50011.1"/>
    <property type="molecule type" value="Genomic_DNA"/>
</dbReference>
<dbReference type="EMBL" id="AF065944">
    <property type="protein sequence ID" value="AAC17511.1"/>
    <property type="molecule type" value="mRNA"/>
</dbReference>
<dbReference type="EMBL" id="AF065945">
    <property type="protein sequence ID" value="AAC17512.1"/>
    <property type="molecule type" value="mRNA"/>
</dbReference>
<dbReference type="EMBL" id="AF065946">
    <property type="protein sequence ID" value="AAC17513.1"/>
    <property type="molecule type" value="mRNA"/>
</dbReference>
<dbReference type="EMBL" id="AF065947">
    <property type="protein sequence ID" value="AAC17514.1"/>
    <property type="molecule type" value="mRNA"/>
</dbReference>
<dbReference type="EMBL" id="AF128187">
    <property type="protein sequence ID" value="AAF22528.1"/>
    <property type="molecule type" value="mRNA"/>
</dbReference>
<dbReference type="EMBL" id="AB051897">
    <property type="protein sequence ID" value="BAB18731.1"/>
    <property type="molecule type" value="Genomic_DNA"/>
</dbReference>
<dbReference type="EMBL" id="AK003101">
    <property type="protein sequence ID" value="BAB22566.1"/>
    <property type="molecule type" value="mRNA"/>
</dbReference>
<dbReference type="EMBL" id="BC033508">
    <property type="protein sequence ID" value="AAH33508.1"/>
    <property type="molecule type" value="mRNA"/>
</dbReference>
<dbReference type="CCDS" id="CCDS36254.1"/>
<dbReference type="PIR" id="I48875">
    <property type="entry name" value="A46539"/>
</dbReference>
<dbReference type="RefSeq" id="NP_038681.2">
    <property type="nucleotide sequence ID" value="NM_013653.3"/>
</dbReference>
<dbReference type="PDB" id="5YAM">
    <property type="method" value="NMR"/>
    <property type="chains" value="A/B=24-91"/>
</dbReference>
<dbReference type="PDBsum" id="5YAM"/>
<dbReference type="SMR" id="P30882"/>
<dbReference type="FunCoup" id="P30882">
    <property type="interactions" value="828"/>
</dbReference>
<dbReference type="IntAct" id="P30882">
    <property type="interactions" value="4"/>
</dbReference>
<dbReference type="STRING" id="10090.ENSMUSP00000039600"/>
<dbReference type="PhosphoSitePlus" id="P30882"/>
<dbReference type="PaxDb" id="10090-ENSMUSP00000039600"/>
<dbReference type="ProteomicsDB" id="281333"/>
<dbReference type="DNASU" id="20304"/>
<dbReference type="Ensembl" id="ENSMUST00000035938.3">
    <property type="protein sequence ID" value="ENSMUSP00000039600.3"/>
    <property type="gene ID" value="ENSMUSG00000035042.3"/>
</dbReference>
<dbReference type="GeneID" id="20304"/>
<dbReference type="KEGG" id="mmu:20304"/>
<dbReference type="UCSC" id="uc007kpi.2">
    <property type="organism name" value="mouse"/>
</dbReference>
<dbReference type="AGR" id="MGI:98262"/>
<dbReference type="CTD" id="6352"/>
<dbReference type="MGI" id="MGI:98262">
    <property type="gene designation" value="Ccl5"/>
</dbReference>
<dbReference type="VEuPathDB" id="HostDB:ENSMUSG00000035042"/>
<dbReference type="eggNOG" id="ENOG502S8D1">
    <property type="taxonomic scope" value="Eukaryota"/>
</dbReference>
<dbReference type="GeneTree" id="ENSGT01100000263482"/>
<dbReference type="HOGENOM" id="CLU_141716_4_2_1"/>
<dbReference type="InParanoid" id="P30882"/>
<dbReference type="OMA" id="HIQEYFY"/>
<dbReference type="OrthoDB" id="8900217at2759"/>
<dbReference type="PhylomeDB" id="P30882"/>
<dbReference type="TreeFam" id="TF334888"/>
<dbReference type="Reactome" id="R-MMU-380108">
    <property type="pathway name" value="Chemokine receptors bind chemokines"/>
</dbReference>
<dbReference type="Reactome" id="R-MMU-418594">
    <property type="pathway name" value="G alpha (i) signalling events"/>
</dbReference>
<dbReference type="BioGRID-ORCS" id="20304">
    <property type="hits" value="3 hits in 82 CRISPR screens"/>
</dbReference>
<dbReference type="PRO" id="PR:P30882"/>
<dbReference type="Proteomes" id="UP000000589">
    <property type="component" value="Chromosome 11"/>
</dbReference>
<dbReference type="RNAct" id="P30882">
    <property type="molecule type" value="protein"/>
</dbReference>
<dbReference type="Bgee" id="ENSMUSG00000035042">
    <property type="expression patterns" value="Expressed in peripheral lymph node and 101 other cell types or tissues"/>
</dbReference>
<dbReference type="ExpressionAtlas" id="P30882">
    <property type="expression patterns" value="baseline and differential"/>
</dbReference>
<dbReference type="GO" id="GO:0005737">
    <property type="term" value="C:cytoplasm"/>
    <property type="evidence" value="ECO:0000314"/>
    <property type="project" value="MGI"/>
</dbReference>
<dbReference type="GO" id="GO:0005615">
    <property type="term" value="C:extracellular space"/>
    <property type="evidence" value="ECO:0000314"/>
    <property type="project" value="MGI"/>
</dbReference>
<dbReference type="GO" id="GO:0031726">
    <property type="term" value="F:CCR1 chemokine receptor binding"/>
    <property type="evidence" value="ECO:0000314"/>
    <property type="project" value="BHF-UCL"/>
</dbReference>
<dbReference type="GO" id="GO:0031730">
    <property type="term" value="F:CCR5 chemokine receptor binding"/>
    <property type="evidence" value="ECO:0000250"/>
    <property type="project" value="BHF-UCL"/>
</dbReference>
<dbReference type="GO" id="GO:0042056">
    <property type="term" value="F:chemoattractant activity"/>
    <property type="evidence" value="ECO:0007669"/>
    <property type="project" value="Ensembl"/>
</dbReference>
<dbReference type="GO" id="GO:0008009">
    <property type="term" value="F:chemokine activity"/>
    <property type="evidence" value="ECO:0000250"/>
    <property type="project" value="BHF-UCL"/>
</dbReference>
<dbReference type="GO" id="GO:0046817">
    <property type="term" value="F:chemokine receptor antagonist activity"/>
    <property type="evidence" value="ECO:0000250"/>
    <property type="project" value="BHF-UCL"/>
</dbReference>
<dbReference type="GO" id="GO:0004435">
    <property type="term" value="F:phosphatidylinositol-4,5-bisphosphate phospholipase C activity"/>
    <property type="evidence" value="ECO:0007669"/>
    <property type="project" value="Ensembl"/>
</dbReference>
<dbReference type="GO" id="GO:0016004">
    <property type="term" value="F:phospholipase activator activity"/>
    <property type="evidence" value="ECO:0007669"/>
    <property type="project" value="Ensembl"/>
</dbReference>
<dbReference type="GO" id="GO:0042803">
    <property type="term" value="F:protein homodimerization activity"/>
    <property type="evidence" value="ECO:0000250"/>
    <property type="project" value="BHF-UCL"/>
</dbReference>
<dbReference type="GO" id="GO:0004672">
    <property type="term" value="F:protein kinase activity"/>
    <property type="evidence" value="ECO:0007669"/>
    <property type="project" value="Ensembl"/>
</dbReference>
<dbReference type="GO" id="GO:0030298">
    <property type="term" value="F:receptor signaling protein tyrosine kinase activator activity"/>
    <property type="evidence" value="ECO:0000250"/>
    <property type="project" value="BHF-UCL"/>
</dbReference>
<dbReference type="GO" id="GO:0006816">
    <property type="term" value="P:calcium ion transport"/>
    <property type="evidence" value="ECO:0007669"/>
    <property type="project" value="Ensembl"/>
</dbReference>
<dbReference type="GO" id="GO:0007267">
    <property type="term" value="P:cell-cell signaling"/>
    <property type="evidence" value="ECO:0000250"/>
    <property type="project" value="BHF-UCL"/>
</dbReference>
<dbReference type="GO" id="GO:0044344">
    <property type="term" value="P:cellular response to fibroblast growth factor stimulus"/>
    <property type="evidence" value="ECO:0007669"/>
    <property type="project" value="Ensembl"/>
</dbReference>
<dbReference type="GO" id="GO:0071347">
    <property type="term" value="P:cellular response to interleukin-1"/>
    <property type="evidence" value="ECO:0007669"/>
    <property type="project" value="Ensembl"/>
</dbReference>
<dbReference type="GO" id="GO:0071356">
    <property type="term" value="P:cellular response to tumor necrosis factor"/>
    <property type="evidence" value="ECO:0007669"/>
    <property type="project" value="Ensembl"/>
</dbReference>
<dbReference type="GO" id="GO:0071346">
    <property type="term" value="P:cellular response to type II interferon"/>
    <property type="evidence" value="ECO:0007669"/>
    <property type="project" value="Ensembl"/>
</dbReference>
<dbReference type="GO" id="GO:0098586">
    <property type="term" value="P:cellular response to virus"/>
    <property type="evidence" value="ECO:0007669"/>
    <property type="project" value="Ensembl"/>
</dbReference>
<dbReference type="GO" id="GO:0035689">
    <property type="term" value="P:chemokine (C-C motif) ligand 5 signaling pathway"/>
    <property type="evidence" value="ECO:0007669"/>
    <property type="project" value="Ensembl"/>
</dbReference>
<dbReference type="GO" id="GO:0070098">
    <property type="term" value="P:chemokine-mediated signaling pathway"/>
    <property type="evidence" value="ECO:0000250"/>
    <property type="project" value="UniProtKB"/>
</dbReference>
<dbReference type="GO" id="GO:0048245">
    <property type="term" value="P:eosinophil chemotaxis"/>
    <property type="evidence" value="ECO:0000250"/>
    <property type="project" value="BHF-UCL"/>
</dbReference>
<dbReference type="GO" id="GO:0050673">
    <property type="term" value="P:epithelial cell proliferation"/>
    <property type="evidence" value="ECO:0000315"/>
    <property type="project" value="MGI"/>
</dbReference>
<dbReference type="GO" id="GO:0006887">
    <property type="term" value="P:exocytosis"/>
    <property type="evidence" value="ECO:0007669"/>
    <property type="project" value="Ensembl"/>
</dbReference>
<dbReference type="GO" id="GO:0007186">
    <property type="term" value="P:G protein-coupled receptor signaling pathway"/>
    <property type="evidence" value="ECO:0000250"/>
    <property type="project" value="UniProtKB"/>
</dbReference>
<dbReference type="GO" id="GO:0006954">
    <property type="term" value="P:inflammatory response"/>
    <property type="evidence" value="ECO:0000315"/>
    <property type="project" value="MGI"/>
</dbReference>
<dbReference type="GO" id="GO:0006874">
    <property type="term" value="P:intracellular calcium ion homeostasis"/>
    <property type="evidence" value="ECO:0007669"/>
    <property type="project" value="Ensembl"/>
</dbReference>
<dbReference type="GO" id="GO:0007159">
    <property type="term" value="P:leukocyte cell-cell adhesion"/>
    <property type="evidence" value="ECO:0000250"/>
    <property type="project" value="BHF-UCL"/>
</dbReference>
<dbReference type="GO" id="GO:0043922">
    <property type="term" value="P:negative regulation by host of viral transcription"/>
    <property type="evidence" value="ECO:0007669"/>
    <property type="project" value="Ensembl"/>
</dbReference>
<dbReference type="GO" id="GO:2000110">
    <property type="term" value="P:negative regulation of macrophage apoptotic process"/>
    <property type="evidence" value="ECO:0000315"/>
    <property type="project" value="BHF-UCL"/>
</dbReference>
<dbReference type="GO" id="GO:0070233">
    <property type="term" value="P:negative regulation of T cell apoptotic process"/>
    <property type="evidence" value="ECO:0000250"/>
    <property type="project" value="BHF-UCL"/>
</dbReference>
<dbReference type="GO" id="GO:0045071">
    <property type="term" value="P:negative regulation of viral genome replication"/>
    <property type="evidence" value="ECO:0000250"/>
    <property type="project" value="BHF-UCL"/>
</dbReference>
<dbReference type="GO" id="GO:0042119">
    <property type="term" value="P:neutrophil activation"/>
    <property type="evidence" value="ECO:0000250"/>
    <property type="project" value="BHF-UCL"/>
</dbReference>
<dbReference type="GO" id="GO:0031583">
    <property type="term" value="P:phospholipase D-activating G protein-coupled receptor signaling pathway"/>
    <property type="evidence" value="ECO:0000250"/>
    <property type="project" value="BHF-UCL"/>
</dbReference>
<dbReference type="GO" id="GO:0051928">
    <property type="term" value="P:positive regulation of calcium ion transport"/>
    <property type="evidence" value="ECO:0007669"/>
    <property type="project" value="Ensembl"/>
</dbReference>
<dbReference type="GO" id="GO:0045785">
    <property type="term" value="P:positive regulation of cell adhesion"/>
    <property type="evidence" value="ECO:0000250"/>
    <property type="project" value="BHF-UCL"/>
</dbReference>
<dbReference type="GO" id="GO:0033634">
    <property type="term" value="P:positive regulation of cell-cell adhesion mediated by integrin"/>
    <property type="evidence" value="ECO:0000250"/>
    <property type="project" value="BHF-UCL"/>
</dbReference>
<dbReference type="GO" id="GO:2000343">
    <property type="term" value="P:positive regulation of chemokine (C-X-C motif) ligand 2 production"/>
    <property type="evidence" value="ECO:0000303"/>
    <property type="project" value="BHF-UCL"/>
</dbReference>
<dbReference type="GO" id="GO:0002230">
    <property type="term" value="P:positive regulation of defense response to virus by host"/>
    <property type="evidence" value="ECO:0000305"/>
    <property type="project" value="BHF-UCL"/>
</dbReference>
<dbReference type="GO" id="GO:0050679">
    <property type="term" value="P:positive regulation of epithelial cell proliferation"/>
    <property type="evidence" value="ECO:0000315"/>
    <property type="project" value="MGI"/>
</dbReference>
<dbReference type="GO" id="GO:0045745">
    <property type="term" value="P:positive regulation of G protein-coupled receptor signaling pathway"/>
    <property type="evidence" value="ECO:0007669"/>
    <property type="project" value="Ensembl"/>
</dbReference>
<dbReference type="GO" id="GO:0034112">
    <property type="term" value="P:positive regulation of homotypic cell-cell adhesion"/>
    <property type="evidence" value="ECO:0000250"/>
    <property type="project" value="BHF-UCL"/>
</dbReference>
<dbReference type="GO" id="GO:0010759">
    <property type="term" value="P:positive regulation of macrophage chemotaxis"/>
    <property type="evidence" value="ECO:0000250"/>
    <property type="project" value="BHF-UCL"/>
</dbReference>
<dbReference type="GO" id="GO:0090026">
    <property type="term" value="P:positive regulation of monocyte chemotaxis"/>
    <property type="evidence" value="ECO:0000314"/>
    <property type="project" value="BHF-UCL"/>
</dbReference>
<dbReference type="GO" id="GO:2000503">
    <property type="term" value="P:positive regulation of natural killer cell chemotaxis"/>
    <property type="evidence" value="ECO:0007669"/>
    <property type="project" value="Ensembl"/>
</dbReference>
<dbReference type="GO" id="GO:0051897">
    <property type="term" value="P:positive regulation of phosphatidylinositol 3-kinase/protein kinase B signal transduction"/>
    <property type="evidence" value="ECO:0000250"/>
    <property type="project" value="BHF-UCL"/>
</dbReference>
<dbReference type="GO" id="GO:1904894">
    <property type="term" value="P:positive regulation of receptor signaling pathway via STAT"/>
    <property type="evidence" value="ECO:0000250"/>
    <property type="project" value="BHF-UCL"/>
</dbReference>
<dbReference type="GO" id="GO:0014911">
    <property type="term" value="P:positive regulation of smooth muscle cell migration"/>
    <property type="evidence" value="ECO:0000250"/>
    <property type="project" value="BHF-UCL"/>
</dbReference>
<dbReference type="GO" id="GO:0048661">
    <property type="term" value="P:positive regulation of smooth muscle cell proliferation"/>
    <property type="evidence" value="ECO:0000250"/>
    <property type="project" value="BHF-UCL"/>
</dbReference>
<dbReference type="GO" id="GO:0070234">
    <property type="term" value="P:positive regulation of T cell apoptotic process"/>
    <property type="evidence" value="ECO:0000250"/>
    <property type="project" value="BHF-UCL"/>
</dbReference>
<dbReference type="GO" id="GO:0010820">
    <property type="term" value="P:positive regulation of T cell chemotaxis"/>
    <property type="evidence" value="ECO:0000250"/>
    <property type="project" value="BHF-UCL"/>
</dbReference>
<dbReference type="GO" id="GO:2000406">
    <property type="term" value="P:positive regulation of T cell migration"/>
    <property type="evidence" value="ECO:0000266"/>
    <property type="project" value="MGI"/>
</dbReference>
<dbReference type="GO" id="GO:0042102">
    <property type="term" value="P:positive regulation of T cell proliferation"/>
    <property type="evidence" value="ECO:0007669"/>
    <property type="project" value="Ensembl"/>
</dbReference>
<dbReference type="GO" id="GO:0032008">
    <property type="term" value="P:positive regulation of TOR signaling"/>
    <property type="evidence" value="ECO:0000250"/>
    <property type="project" value="BHF-UCL"/>
</dbReference>
<dbReference type="GO" id="GO:0050796">
    <property type="term" value="P:regulation of insulin secretion"/>
    <property type="evidence" value="ECO:0000250"/>
    <property type="project" value="UniProtKB"/>
</dbReference>
<dbReference type="GO" id="GO:0050863">
    <property type="term" value="P:regulation of T cell activation"/>
    <property type="evidence" value="ECO:0000250"/>
    <property type="project" value="BHF-UCL"/>
</dbReference>
<dbReference type="GO" id="GO:0034097">
    <property type="term" value="P:response to cytokine"/>
    <property type="evidence" value="ECO:0000314"/>
    <property type="project" value="MGI"/>
</dbReference>
<dbReference type="GO" id="GO:0009636">
    <property type="term" value="P:response to toxic substance"/>
    <property type="evidence" value="ECO:0007669"/>
    <property type="project" value="Ensembl"/>
</dbReference>
<dbReference type="GO" id="GO:0034612">
    <property type="term" value="P:response to tumor necrosis factor"/>
    <property type="evidence" value="ECO:0000314"/>
    <property type="project" value="MGI"/>
</dbReference>
<dbReference type="CDD" id="cd00272">
    <property type="entry name" value="Chemokine_CC"/>
    <property type="match status" value="1"/>
</dbReference>
<dbReference type="FunFam" id="2.40.50.40:FF:000002">
    <property type="entry name" value="C-C motif chemokine"/>
    <property type="match status" value="1"/>
</dbReference>
<dbReference type="Gene3D" id="2.40.50.40">
    <property type="match status" value="1"/>
</dbReference>
<dbReference type="InterPro" id="IPR039809">
    <property type="entry name" value="Chemokine_b/g/d"/>
</dbReference>
<dbReference type="InterPro" id="IPR000827">
    <property type="entry name" value="Chemokine_CC_CS"/>
</dbReference>
<dbReference type="InterPro" id="IPR001811">
    <property type="entry name" value="Chemokine_IL8-like_dom"/>
</dbReference>
<dbReference type="InterPro" id="IPR036048">
    <property type="entry name" value="Interleukin_8-like_sf"/>
</dbReference>
<dbReference type="PANTHER" id="PTHR12015:SF170">
    <property type="entry name" value="C-C MOTIF CHEMOKINE 5"/>
    <property type="match status" value="1"/>
</dbReference>
<dbReference type="PANTHER" id="PTHR12015">
    <property type="entry name" value="SMALL INDUCIBLE CYTOKINE A"/>
    <property type="match status" value="1"/>
</dbReference>
<dbReference type="Pfam" id="PF00048">
    <property type="entry name" value="IL8"/>
    <property type="match status" value="1"/>
</dbReference>
<dbReference type="SMART" id="SM00199">
    <property type="entry name" value="SCY"/>
    <property type="match status" value="1"/>
</dbReference>
<dbReference type="SUPFAM" id="SSF54117">
    <property type="entry name" value="Interleukin 8-like chemokines"/>
    <property type="match status" value="1"/>
</dbReference>
<dbReference type="PROSITE" id="PS00472">
    <property type="entry name" value="SMALL_CYTOKINES_CC"/>
    <property type="match status" value="1"/>
</dbReference>
<feature type="signal peptide" evidence="3">
    <location>
        <begin position="1"/>
        <end position="23"/>
    </location>
</feature>
<feature type="chain" id="PRO_0000005179" description="C-C motif chemokine 5">
    <location>
        <begin position="24"/>
        <end position="91"/>
    </location>
</feature>
<feature type="disulfide bond" evidence="1">
    <location>
        <begin position="33"/>
        <end position="57"/>
    </location>
</feature>
<feature type="disulfide bond" evidence="1">
    <location>
        <begin position="34"/>
        <end position="73"/>
    </location>
</feature>
<feature type="sequence conflict" description="In Ref. 2; AAB22330." evidence="4" ref="2">
    <original>T</original>
    <variation>A</variation>
    <location>
        <position position="19"/>
    </location>
</feature>
<feature type="sequence conflict" description="In Ref. 1; AAA40029." evidence="4" ref="1">
    <original>A</original>
    <variation>E</variation>
    <location>
        <position position="41"/>
    </location>
</feature>
<feature type="strand" evidence="5">
    <location>
        <begin position="31"/>
        <end position="33"/>
    </location>
</feature>
<feature type="turn" evidence="5">
    <location>
        <begin position="44"/>
        <end position="46"/>
    </location>
</feature>
<feature type="strand" evidence="5">
    <location>
        <begin position="47"/>
        <end position="52"/>
    </location>
</feature>
<feature type="strand" evidence="5">
    <location>
        <begin position="57"/>
        <end position="59"/>
    </location>
</feature>
<feature type="strand" evidence="5">
    <location>
        <begin position="62"/>
        <end position="66"/>
    </location>
</feature>
<feature type="strand" evidence="5">
    <location>
        <begin position="71"/>
        <end position="74"/>
    </location>
</feature>
<feature type="helix" evidence="5">
    <location>
        <begin position="79"/>
        <end position="88"/>
    </location>
</feature>
<gene>
    <name type="primary">Ccl5</name>
    <name type="synonym">Scya5</name>
</gene>
<name>CCL5_MOUSE</name>
<reference key="1">
    <citation type="journal article" date="1992" name="Kidney Int.">
        <title>Isolation and characterization of cDNA from renal tubular epithelium encoding murine Rantes.</title>
        <authorList>
            <person name="Heeger P."/>
            <person name="Wolf G."/>
            <person name="Meyers C."/>
            <person name="Sun M.J."/>
            <person name="O'Farrell S.C."/>
            <person name="Krensky A.M."/>
            <person name="Neilson E.G."/>
        </authorList>
    </citation>
    <scope>NUCLEOTIDE SEQUENCE [MRNA]</scope>
</reference>
<reference key="2">
    <citation type="journal article" date="1992" name="Eur. J. Immunol.">
        <title>Molecular cloning and expression of the murine RANTES cytokine: structural and functional conservation between mouse and man.</title>
        <authorList>
            <person name="Schall T.J."/>
            <person name="Simpson N.J."/>
            <person name="Mak J.Y."/>
        </authorList>
    </citation>
    <scope>NUCLEOTIDE SEQUENCE [MRNA]</scope>
</reference>
<reference key="3">
    <citation type="journal article" date="1994" name="J. Immunol.">
        <title>Cloning, genomic organization, and chromosomal localization of the Scya5 gene encoding the murine chemokine RANTES.</title>
        <authorList>
            <person name="Danoff T.M."/>
            <person name="Lalley P.A."/>
            <person name="Chang Y.S."/>
            <person name="Heeger P.S."/>
            <person name="Neilson E.G."/>
        </authorList>
    </citation>
    <scope>NUCLEOTIDE SEQUENCE</scope>
    <source>
        <strain>NIH Swiss</strain>
    </source>
</reference>
<reference key="4">
    <citation type="journal article" date="1994" name="Mol. Cell. Biol.">
        <title>Definition of a lipopolysaccharide-responsive element in the 5'-flanking regions of MuRantes and crg-2.</title>
        <authorList>
            <person name="Shin H.S."/>
            <person name="Drysdale B.E."/>
            <person name="Shin M.L."/>
            <person name="Noble P.W."/>
            <person name="Fisher S.N."/>
            <person name="Paznekas W.A."/>
        </authorList>
    </citation>
    <scope>NUCLEOTIDE SEQUENCE [GENOMIC DNA]</scope>
    <source>
        <strain>BALB/cJ</strain>
    </source>
</reference>
<reference key="5">
    <citation type="journal article" date="1999" name="J. Immunol.">
        <title>Sequence polymorphisms in the chemokines Scya1 (TCA-3), Scya2 (monocyte chemoattractant protein (MCP)-1), and Scya12 (MCP-5) are candidates for eae7, a locus controlling susceptibility to monophasic remitting/nonrelapsing experimental allergic encephalomyelitis.</title>
        <authorList>
            <person name="Teuscher C."/>
            <person name="Butterfield R.J."/>
            <person name="Ma R.Z."/>
            <person name="Zachary J.F."/>
            <person name="Doerge R.W."/>
            <person name="Blankenhorn E.P."/>
        </authorList>
    </citation>
    <scope>NUCLEOTIDE SEQUENCE</scope>
    <source>
        <strain>B10.S/J</strain>
        <strain>BALB/cJ</strain>
        <strain>DBA/2J</strain>
        <strain>NOD/LtJ</strain>
        <strain>SJL/J</strain>
        <tissue>Spleen</tissue>
    </source>
</reference>
<reference key="6">
    <citation type="submission" date="2000-11" db="EMBL/GenBank/DDBJ databases">
        <title>Organization of the mouse CC chemokine cluster containing the genes for C10, MRP-2 and RANTES.</title>
        <authorList>
            <person name="Nomiyama H."/>
        </authorList>
    </citation>
    <scope>NUCLEOTIDE SEQUENCE</scope>
    <source>
        <strain>129/Sv</strain>
    </source>
</reference>
<reference key="7">
    <citation type="journal article" date="2005" name="Science">
        <title>The transcriptional landscape of the mammalian genome.</title>
        <authorList>
            <person name="Carninci P."/>
            <person name="Kasukawa T."/>
            <person name="Katayama S."/>
            <person name="Gough J."/>
            <person name="Frith M.C."/>
            <person name="Maeda N."/>
            <person name="Oyama R."/>
            <person name="Ravasi T."/>
            <person name="Lenhard B."/>
            <person name="Wells C."/>
            <person name="Kodzius R."/>
            <person name="Shimokawa K."/>
            <person name="Bajic V.B."/>
            <person name="Brenner S.E."/>
            <person name="Batalov S."/>
            <person name="Forrest A.R."/>
            <person name="Zavolan M."/>
            <person name="Davis M.J."/>
            <person name="Wilming L.G."/>
            <person name="Aidinis V."/>
            <person name="Allen J.E."/>
            <person name="Ambesi-Impiombato A."/>
            <person name="Apweiler R."/>
            <person name="Aturaliya R.N."/>
            <person name="Bailey T.L."/>
            <person name="Bansal M."/>
            <person name="Baxter L."/>
            <person name="Beisel K.W."/>
            <person name="Bersano T."/>
            <person name="Bono H."/>
            <person name="Chalk A.M."/>
            <person name="Chiu K.P."/>
            <person name="Choudhary V."/>
            <person name="Christoffels A."/>
            <person name="Clutterbuck D.R."/>
            <person name="Crowe M.L."/>
            <person name="Dalla E."/>
            <person name="Dalrymple B.P."/>
            <person name="de Bono B."/>
            <person name="Della Gatta G."/>
            <person name="di Bernardo D."/>
            <person name="Down T."/>
            <person name="Engstrom P."/>
            <person name="Fagiolini M."/>
            <person name="Faulkner G."/>
            <person name="Fletcher C.F."/>
            <person name="Fukushima T."/>
            <person name="Furuno M."/>
            <person name="Futaki S."/>
            <person name="Gariboldi M."/>
            <person name="Georgii-Hemming P."/>
            <person name="Gingeras T.R."/>
            <person name="Gojobori T."/>
            <person name="Green R.E."/>
            <person name="Gustincich S."/>
            <person name="Harbers M."/>
            <person name="Hayashi Y."/>
            <person name="Hensch T.K."/>
            <person name="Hirokawa N."/>
            <person name="Hill D."/>
            <person name="Huminiecki L."/>
            <person name="Iacono M."/>
            <person name="Ikeo K."/>
            <person name="Iwama A."/>
            <person name="Ishikawa T."/>
            <person name="Jakt M."/>
            <person name="Kanapin A."/>
            <person name="Katoh M."/>
            <person name="Kawasawa Y."/>
            <person name="Kelso J."/>
            <person name="Kitamura H."/>
            <person name="Kitano H."/>
            <person name="Kollias G."/>
            <person name="Krishnan S.P."/>
            <person name="Kruger A."/>
            <person name="Kummerfeld S.K."/>
            <person name="Kurochkin I.V."/>
            <person name="Lareau L.F."/>
            <person name="Lazarevic D."/>
            <person name="Lipovich L."/>
            <person name="Liu J."/>
            <person name="Liuni S."/>
            <person name="McWilliam S."/>
            <person name="Madan Babu M."/>
            <person name="Madera M."/>
            <person name="Marchionni L."/>
            <person name="Matsuda H."/>
            <person name="Matsuzawa S."/>
            <person name="Miki H."/>
            <person name="Mignone F."/>
            <person name="Miyake S."/>
            <person name="Morris K."/>
            <person name="Mottagui-Tabar S."/>
            <person name="Mulder N."/>
            <person name="Nakano N."/>
            <person name="Nakauchi H."/>
            <person name="Ng P."/>
            <person name="Nilsson R."/>
            <person name="Nishiguchi S."/>
            <person name="Nishikawa S."/>
            <person name="Nori F."/>
            <person name="Ohara O."/>
            <person name="Okazaki Y."/>
            <person name="Orlando V."/>
            <person name="Pang K.C."/>
            <person name="Pavan W.J."/>
            <person name="Pavesi G."/>
            <person name="Pesole G."/>
            <person name="Petrovsky N."/>
            <person name="Piazza S."/>
            <person name="Reed J."/>
            <person name="Reid J.F."/>
            <person name="Ring B.Z."/>
            <person name="Ringwald M."/>
            <person name="Rost B."/>
            <person name="Ruan Y."/>
            <person name="Salzberg S.L."/>
            <person name="Sandelin A."/>
            <person name="Schneider C."/>
            <person name="Schoenbach C."/>
            <person name="Sekiguchi K."/>
            <person name="Semple C.A."/>
            <person name="Seno S."/>
            <person name="Sessa L."/>
            <person name="Sheng Y."/>
            <person name="Shibata Y."/>
            <person name="Shimada H."/>
            <person name="Shimada K."/>
            <person name="Silva D."/>
            <person name="Sinclair B."/>
            <person name="Sperling S."/>
            <person name="Stupka E."/>
            <person name="Sugiura K."/>
            <person name="Sultana R."/>
            <person name="Takenaka Y."/>
            <person name="Taki K."/>
            <person name="Tammoja K."/>
            <person name="Tan S.L."/>
            <person name="Tang S."/>
            <person name="Taylor M.S."/>
            <person name="Tegner J."/>
            <person name="Teichmann S.A."/>
            <person name="Ueda H.R."/>
            <person name="van Nimwegen E."/>
            <person name="Verardo R."/>
            <person name="Wei C.L."/>
            <person name="Yagi K."/>
            <person name="Yamanishi H."/>
            <person name="Zabarovsky E."/>
            <person name="Zhu S."/>
            <person name="Zimmer A."/>
            <person name="Hide W."/>
            <person name="Bult C."/>
            <person name="Grimmond S.M."/>
            <person name="Teasdale R.D."/>
            <person name="Liu E.T."/>
            <person name="Brusic V."/>
            <person name="Quackenbush J."/>
            <person name="Wahlestedt C."/>
            <person name="Mattick J.S."/>
            <person name="Hume D.A."/>
            <person name="Kai C."/>
            <person name="Sasaki D."/>
            <person name="Tomaru Y."/>
            <person name="Fukuda S."/>
            <person name="Kanamori-Katayama M."/>
            <person name="Suzuki M."/>
            <person name="Aoki J."/>
            <person name="Arakawa T."/>
            <person name="Iida J."/>
            <person name="Imamura K."/>
            <person name="Itoh M."/>
            <person name="Kato T."/>
            <person name="Kawaji H."/>
            <person name="Kawagashira N."/>
            <person name="Kawashima T."/>
            <person name="Kojima M."/>
            <person name="Kondo S."/>
            <person name="Konno H."/>
            <person name="Nakano K."/>
            <person name="Ninomiya N."/>
            <person name="Nishio T."/>
            <person name="Okada M."/>
            <person name="Plessy C."/>
            <person name="Shibata K."/>
            <person name="Shiraki T."/>
            <person name="Suzuki S."/>
            <person name="Tagami M."/>
            <person name="Waki K."/>
            <person name="Watahiki A."/>
            <person name="Okamura-Oho Y."/>
            <person name="Suzuki H."/>
            <person name="Kawai J."/>
            <person name="Hayashizaki Y."/>
        </authorList>
    </citation>
    <scope>NUCLEOTIDE SEQUENCE [LARGE SCALE MRNA]</scope>
    <source>
        <strain>C57BL/6J</strain>
        <tissue>Pancreas</tissue>
    </source>
</reference>
<reference key="8">
    <citation type="journal article" date="2004" name="Genome Res.">
        <title>The status, quality, and expansion of the NIH full-length cDNA project: the Mammalian Gene Collection (MGC).</title>
        <authorList>
            <consortium name="The MGC Project Team"/>
        </authorList>
    </citation>
    <scope>NUCLEOTIDE SEQUENCE [LARGE SCALE MRNA]</scope>
    <source>
        <tissue>Mammary gland</tissue>
    </source>
</reference>
<keyword id="KW-0002">3D-structure</keyword>
<keyword id="KW-0145">Chemotaxis</keyword>
<keyword id="KW-0202">Cytokine</keyword>
<keyword id="KW-1015">Disulfide bond</keyword>
<keyword id="KW-0395">Inflammatory response</keyword>
<keyword id="KW-1185">Reference proteome</keyword>
<keyword id="KW-0964">Secreted</keyword>
<keyword id="KW-0732">Signal</keyword>
<protein>
    <recommendedName>
        <fullName>C-C motif chemokine 5</fullName>
    </recommendedName>
    <alternativeName>
        <fullName>MuRantes</fullName>
    </alternativeName>
    <alternativeName>
        <fullName>SIS-delta</fullName>
    </alternativeName>
    <alternativeName>
        <fullName>Small-inducible cytokine A5</fullName>
    </alternativeName>
    <alternativeName>
        <fullName>T-cell-specific protein RANTES</fullName>
    </alternativeName>
</protein>
<comment type="function">
    <text evidence="2">Chemoattractant for blood monocytes, memory T-helper cells and eosinophils. Causes the release of histamine from basophils and activates eosinophils. May activate several chemokine receptors including CCR1, CCR3, CCR4 and CCR5. May also be an agonist of the G protein-coupled receptor GPR75. Together with GPR75, may play a role in neuron survival through activation of a downstream signaling pathway involving the PI3, Akt and MAP kinases. By activating GPR75 may also play a role in insulin secretion by islet cells.</text>
</comment>
<comment type="subcellular location">
    <subcellularLocation>
        <location>Secreted</location>
    </subcellularLocation>
</comment>
<comment type="tissue specificity">
    <text>T-cell and macrophage specific.</text>
</comment>
<comment type="similarity">
    <text evidence="4">Belongs to the intercrine beta (chemokine CC) family.</text>
</comment>
<proteinExistence type="evidence at protein level"/>
<evidence type="ECO:0000250" key="1"/>
<evidence type="ECO:0000250" key="2">
    <source>
        <dbReference type="UniProtKB" id="P13501"/>
    </source>
</evidence>
<evidence type="ECO:0000255" key="3"/>
<evidence type="ECO:0000305" key="4"/>
<evidence type="ECO:0007829" key="5">
    <source>
        <dbReference type="PDB" id="5YAM"/>
    </source>
</evidence>
<accession>P30882</accession>
<sequence length="91" mass="10071">MKISAAALTIILTAAALCTPAPASPYGSDTTPCCFAYLSLALPRAHVKEYFYTSSKCSNLAVVFVTRRNRQVCANPEKKWVQEYINYLEMS</sequence>
<organism>
    <name type="scientific">Mus musculus</name>
    <name type="common">Mouse</name>
    <dbReference type="NCBI Taxonomy" id="10090"/>
    <lineage>
        <taxon>Eukaryota</taxon>
        <taxon>Metazoa</taxon>
        <taxon>Chordata</taxon>
        <taxon>Craniata</taxon>
        <taxon>Vertebrata</taxon>
        <taxon>Euteleostomi</taxon>
        <taxon>Mammalia</taxon>
        <taxon>Eutheria</taxon>
        <taxon>Euarchontoglires</taxon>
        <taxon>Glires</taxon>
        <taxon>Rodentia</taxon>
        <taxon>Myomorpha</taxon>
        <taxon>Muroidea</taxon>
        <taxon>Muridae</taxon>
        <taxon>Murinae</taxon>
        <taxon>Mus</taxon>
        <taxon>Mus</taxon>
    </lineage>
</organism>